<protein>
    <recommendedName>
        <fullName evidence="1">Small ribosomal subunit protein uS9</fullName>
    </recommendedName>
    <alternativeName>
        <fullName evidence="2">30S ribosomal protein S9</fullName>
    </alternativeName>
</protein>
<dbReference type="EMBL" id="CP000680">
    <property type="protein sequence ID" value="ABP83670.1"/>
    <property type="molecule type" value="Genomic_DNA"/>
</dbReference>
<dbReference type="SMR" id="A4XQQ4"/>
<dbReference type="STRING" id="399739.Pmen_0902"/>
<dbReference type="KEGG" id="pmy:Pmen_0902"/>
<dbReference type="eggNOG" id="COG0103">
    <property type="taxonomic scope" value="Bacteria"/>
</dbReference>
<dbReference type="HOGENOM" id="CLU_046483_2_1_6"/>
<dbReference type="OrthoDB" id="9803965at2"/>
<dbReference type="GO" id="GO:0022627">
    <property type="term" value="C:cytosolic small ribosomal subunit"/>
    <property type="evidence" value="ECO:0007669"/>
    <property type="project" value="TreeGrafter"/>
</dbReference>
<dbReference type="GO" id="GO:0003723">
    <property type="term" value="F:RNA binding"/>
    <property type="evidence" value="ECO:0007669"/>
    <property type="project" value="TreeGrafter"/>
</dbReference>
<dbReference type="GO" id="GO:0003735">
    <property type="term" value="F:structural constituent of ribosome"/>
    <property type="evidence" value="ECO:0007669"/>
    <property type="project" value="InterPro"/>
</dbReference>
<dbReference type="GO" id="GO:0006412">
    <property type="term" value="P:translation"/>
    <property type="evidence" value="ECO:0007669"/>
    <property type="project" value="UniProtKB-UniRule"/>
</dbReference>
<dbReference type="FunFam" id="3.30.230.10:FF:000001">
    <property type="entry name" value="30S ribosomal protein S9"/>
    <property type="match status" value="1"/>
</dbReference>
<dbReference type="Gene3D" id="3.30.230.10">
    <property type="match status" value="1"/>
</dbReference>
<dbReference type="HAMAP" id="MF_00532_B">
    <property type="entry name" value="Ribosomal_uS9_B"/>
    <property type="match status" value="1"/>
</dbReference>
<dbReference type="InterPro" id="IPR020568">
    <property type="entry name" value="Ribosomal_Su5_D2-typ_SF"/>
</dbReference>
<dbReference type="InterPro" id="IPR000754">
    <property type="entry name" value="Ribosomal_uS9"/>
</dbReference>
<dbReference type="InterPro" id="IPR023035">
    <property type="entry name" value="Ribosomal_uS9_bac/plastid"/>
</dbReference>
<dbReference type="InterPro" id="IPR020574">
    <property type="entry name" value="Ribosomal_uS9_CS"/>
</dbReference>
<dbReference type="InterPro" id="IPR014721">
    <property type="entry name" value="Ribsml_uS5_D2-typ_fold_subgr"/>
</dbReference>
<dbReference type="NCBIfam" id="NF001099">
    <property type="entry name" value="PRK00132.1"/>
    <property type="match status" value="1"/>
</dbReference>
<dbReference type="PANTHER" id="PTHR21569">
    <property type="entry name" value="RIBOSOMAL PROTEIN S9"/>
    <property type="match status" value="1"/>
</dbReference>
<dbReference type="PANTHER" id="PTHR21569:SF1">
    <property type="entry name" value="SMALL RIBOSOMAL SUBUNIT PROTEIN US9M"/>
    <property type="match status" value="1"/>
</dbReference>
<dbReference type="Pfam" id="PF00380">
    <property type="entry name" value="Ribosomal_S9"/>
    <property type="match status" value="1"/>
</dbReference>
<dbReference type="SUPFAM" id="SSF54211">
    <property type="entry name" value="Ribosomal protein S5 domain 2-like"/>
    <property type="match status" value="1"/>
</dbReference>
<dbReference type="PROSITE" id="PS00360">
    <property type="entry name" value="RIBOSOMAL_S9"/>
    <property type="match status" value="1"/>
</dbReference>
<evidence type="ECO:0000255" key="1">
    <source>
        <dbReference type="HAMAP-Rule" id="MF_00532"/>
    </source>
</evidence>
<evidence type="ECO:0000305" key="2"/>
<keyword id="KW-0687">Ribonucleoprotein</keyword>
<keyword id="KW-0689">Ribosomal protein</keyword>
<name>RS9_ECTM1</name>
<reference key="1">
    <citation type="submission" date="2007-04" db="EMBL/GenBank/DDBJ databases">
        <title>Complete sequence of Pseudomonas mendocina ymp.</title>
        <authorList>
            <consortium name="US DOE Joint Genome Institute"/>
            <person name="Copeland A."/>
            <person name="Lucas S."/>
            <person name="Lapidus A."/>
            <person name="Barry K."/>
            <person name="Glavina del Rio T."/>
            <person name="Dalin E."/>
            <person name="Tice H."/>
            <person name="Pitluck S."/>
            <person name="Kiss H."/>
            <person name="Brettin T."/>
            <person name="Detter J.C."/>
            <person name="Bruce D."/>
            <person name="Han C."/>
            <person name="Schmutz J."/>
            <person name="Larimer F."/>
            <person name="Land M."/>
            <person name="Hauser L."/>
            <person name="Kyrpides N."/>
            <person name="Mikhailova N."/>
            <person name="Hersman L."/>
            <person name="Dubois J."/>
            <person name="Maurice P."/>
            <person name="Richardson P."/>
        </authorList>
    </citation>
    <scope>NUCLEOTIDE SEQUENCE [LARGE SCALE GENOMIC DNA]</scope>
    <source>
        <strain>ymp</strain>
    </source>
</reference>
<accession>A4XQQ4</accession>
<feature type="chain" id="PRO_1000051295" description="Small ribosomal subunit protein uS9">
    <location>
        <begin position="1"/>
        <end position="130"/>
    </location>
</feature>
<proteinExistence type="inferred from homology"/>
<gene>
    <name evidence="1" type="primary">rpsI</name>
    <name type="ordered locus">Pmen_0902</name>
</gene>
<comment type="similarity">
    <text evidence="1">Belongs to the universal ribosomal protein uS9 family.</text>
</comment>
<sequence length="130" mass="14646">MSATQNYGTGRRKTATARVFLRPGTGNISINNRSLDTFFGRETARMVVRQPLELTETTEKFDIYVTVIGGGVSGQAGAIRHGITRALIEYDETLRSPLRKAGYVTRDAREVERKKVGLRKARKRPQYSKR</sequence>
<organism>
    <name type="scientific">Ectopseudomonas mendocina (strain ymp)</name>
    <name type="common">Pseudomonas mendocina</name>
    <dbReference type="NCBI Taxonomy" id="399739"/>
    <lineage>
        <taxon>Bacteria</taxon>
        <taxon>Pseudomonadati</taxon>
        <taxon>Pseudomonadota</taxon>
        <taxon>Gammaproteobacteria</taxon>
        <taxon>Pseudomonadales</taxon>
        <taxon>Pseudomonadaceae</taxon>
        <taxon>Ectopseudomonas</taxon>
    </lineage>
</organism>